<sequence length="268" mass="28488">MSRLQTRFAQLKQENRAALVTFVTAGDPDYASSLEILKGLPAAGADVIELGMPFTDPMADGPAIQLANIRALDGGQTLARTLQMVREFRSGDSETPLVLMGYFNPIHHYGVERFIAEAKEVGVDGLIVVDLPPEHNEDLCHPAQAAGLDFIRLTTPTTGDQRLPTVLEGSSGFVYYVSVAGVTGANAATLEHVEEAVARLRRHTDLPIGIGFGIRSAEHAAAVARLADGVVVGSALIDRIAKARDNAQAVKDVLALCGELAEGVRNAR</sequence>
<organism>
    <name type="scientific">Pseudomonas aeruginosa (strain UCBPP-PA14)</name>
    <dbReference type="NCBI Taxonomy" id="208963"/>
    <lineage>
        <taxon>Bacteria</taxon>
        <taxon>Pseudomonadati</taxon>
        <taxon>Pseudomonadota</taxon>
        <taxon>Gammaproteobacteria</taxon>
        <taxon>Pseudomonadales</taxon>
        <taxon>Pseudomonadaceae</taxon>
        <taxon>Pseudomonas</taxon>
    </lineage>
</organism>
<feature type="chain" id="PRO_1000018253" description="Tryptophan synthase alpha chain">
    <location>
        <begin position="1"/>
        <end position="268"/>
    </location>
</feature>
<feature type="active site" description="Proton acceptor" evidence="1">
    <location>
        <position position="49"/>
    </location>
</feature>
<feature type="active site" description="Proton acceptor" evidence="1">
    <location>
        <position position="60"/>
    </location>
</feature>
<dbReference type="EC" id="4.2.1.20" evidence="1"/>
<dbReference type="EMBL" id="CP000438">
    <property type="protein sequence ID" value="ABJ14992.1"/>
    <property type="molecule type" value="Genomic_DNA"/>
</dbReference>
<dbReference type="RefSeq" id="WP_003097337.1">
    <property type="nucleotide sequence ID" value="NZ_CP034244.1"/>
</dbReference>
<dbReference type="SMR" id="Q02V45"/>
<dbReference type="KEGG" id="pau:PA14_00440"/>
<dbReference type="PseudoCAP" id="PA14_00440"/>
<dbReference type="HOGENOM" id="CLU_016734_0_4_6"/>
<dbReference type="BioCyc" id="PAER208963:G1G74-36-MONOMER"/>
<dbReference type="UniPathway" id="UPA00035">
    <property type="reaction ID" value="UER00044"/>
</dbReference>
<dbReference type="Proteomes" id="UP000000653">
    <property type="component" value="Chromosome"/>
</dbReference>
<dbReference type="GO" id="GO:0005829">
    <property type="term" value="C:cytosol"/>
    <property type="evidence" value="ECO:0007669"/>
    <property type="project" value="TreeGrafter"/>
</dbReference>
<dbReference type="GO" id="GO:0004834">
    <property type="term" value="F:tryptophan synthase activity"/>
    <property type="evidence" value="ECO:0007669"/>
    <property type="project" value="UniProtKB-UniRule"/>
</dbReference>
<dbReference type="CDD" id="cd04724">
    <property type="entry name" value="Tryptophan_synthase_alpha"/>
    <property type="match status" value="1"/>
</dbReference>
<dbReference type="FunFam" id="3.20.20.70:FF:000037">
    <property type="entry name" value="Tryptophan synthase alpha chain"/>
    <property type="match status" value="1"/>
</dbReference>
<dbReference type="Gene3D" id="3.20.20.70">
    <property type="entry name" value="Aldolase class I"/>
    <property type="match status" value="1"/>
</dbReference>
<dbReference type="HAMAP" id="MF_00131">
    <property type="entry name" value="Trp_synth_alpha"/>
    <property type="match status" value="1"/>
</dbReference>
<dbReference type="InterPro" id="IPR013785">
    <property type="entry name" value="Aldolase_TIM"/>
</dbReference>
<dbReference type="InterPro" id="IPR011060">
    <property type="entry name" value="RibuloseP-bd_barrel"/>
</dbReference>
<dbReference type="InterPro" id="IPR018204">
    <property type="entry name" value="Trp_synthase_alpha_AS"/>
</dbReference>
<dbReference type="InterPro" id="IPR002028">
    <property type="entry name" value="Trp_synthase_suA"/>
</dbReference>
<dbReference type="NCBIfam" id="TIGR00262">
    <property type="entry name" value="trpA"/>
    <property type="match status" value="1"/>
</dbReference>
<dbReference type="PANTHER" id="PTHR43406:SF1">
    <property type="entry name" value="TRYPTOPHAN SYNTHASE ALPHA CHAIN, CHLOROPLASTIC"/>
    <property type="match status" value="1"/>
</dbReference>
<dbReference type="PANTHER" id="PTHR43406">
    <property type="entry name" value="TRYPTOPHAN SYNTHASE, ALPHA CHAIN"/>
    <property type="match status" value="1"/>
</dbReference>
<dbReference type="Pfam" id="PF00290">
    <property type="entry name" value="Trp_syntA"/>
    <property type="match status" value="1"/>
</dbReference>
<dbReference type="SUPFAM" id="SSF51366">
    <property type="entry name" value="Ribulose-phoshate binding barrel"/>
    <property type="match status" value="1"/>
</dbReference>
<dbReference type="PROSITE" id="PS00167">
    <property type="entry name" value="TRP_SYNTHASE_ALPHA"/>
    <property type="match status" value="1"/>
</dbReference>
<gene>
    <name evidence="1" type="primary">trpA</name>
    <name type="ordered locus">PA14_00440</name>
</gene>
<protein>
    <recommendedName>
        <fullName evidence="1">Tryptophan synthase alpha chain</fullName>
        <ecNumber evidence="1">4.2.1.20</ecNumber>
    </recommendedName>
</protein>
<reference key="1">
    <citation type="journal article" date="2006" name="Genome Biol.">
        <title>Genomic analysis reveals that Pseudomonas aeruginosa virulence is combinatorial.</title>
        <authorList>
            <person name="Lee D.G."/>
            <person name="Urbach J.M."/>
            <person name="Wu G."/>
            <person name="Liberati N.T."/>
            <person name="Feinbaum R.L."/>
            <person name="Miyata S."/>
            <person name="Diggins L.T."/>
            <person name="He J."/>
            <person name="Saucier M."/>
            <person name="Deziel E."/>
            <person name="Friedman L."/>
            <person name="Li L."/>
            <person name="Grills G."/>
            <person name="Montgomery K."/>
            <person name="Kucherlapati R."/>
            <person name="Rahme L.G."/>
            <person name="Ausubel F.M."/>
        </authorList>
    </citation>
    <scope>NUCLEOTIDE SEQUENCE [LARGE SCALE GENOMIC DNA]</scope>
    <source>
        <strain>UCBPP-PA14</strain>
    </source>
</reference>
<keyword id="KW-0028">Amino-acid biosynthesis</keyword>
<keyword id="KW-0057">Aromatic amino acid biosynthesis</keyword>
<keyword id="KW-0456">Lyase</keyword>
<keyword id="KW-0822">Tryptophan biosynthesis</keyword>
<name>TRPA_PSEAB</name>
<comment type="function">
    <text evidence="1">The alpha subunit is responsible for the aldol cleavage of indoleglycerol phosphate to indole and glyceraldehyde 3-phosphate.</text>
</comment>
<comment type="catalytic activity">
    <reaction evidence="1">
        <text>(1S,2R)-1-C-(indol-3-yl)glycerol 3-phosphate + L-serine = D-glyceraldehyde 3-phosphate + L-tryptophan + H2O</text>
        <dbReference type="Rhea" id="RHEA:10532"/>
        <dbReference type="ChEBI" id="CHEBI:15377"/>
        <dbReference type="ChEBI" id="CHEBI:33384"/>
        <dbReference type="ChEBI" id="CHEBI:57912"/>
        <dbReference type="ChEBI" id="CHEBI:58866"/>
        <dbReference type="ChEBI" id="CHEBI:59776"/>
        <dbReference type="EC" id="4.2.1.20"/>
    </reaction>
</comment>
<comment type="pathway">
    <text evidence="1">Amino-acid biosynthesis; L-tryptophan biosynthesis; L-tryptophan from chorismate: step 5/5.</text>
</comment>
<comment type="subunit">
    <text evidence="1">Tetramer of two alpha and two beta chains.</text>
</comment>
<comment type="similarity">
    <text evidence="1">Belongs to the TrpA family.</text>
</comment>
<accession>Q02V45</accession>
<proteinExistence type="inferred from homology"/>
<evidence type="ECO:0000255" key="1">
    <source>
        <dbReference type="HAMAP-Rule" id="MF_00131"/>
    </source>
</evidence>